<feature type="chain" id="PRO_0000089805" description="Swi5-dependent recombination DNA repair protein 1 homolog">
    <location>
        <begin position="1"/>
        <end position="245"/>
    </location>
</feature>
<feature type="region of interest" description="Disordered" evidence="3">
    <location>
        <begin position="1"/>
        <end position="54"/>
    </location>
</feature>
<feature type="coiled-coil region" evidence="2">
    <location>
        <begin position="149"/>
        <end position="177"/>
    </location>
</feature>
<feature type="compositionally biased region" description="Polar residues" evidence="3">
    <location>
        <begin position="26"/>
        <end position="48"/>
    </location>
</feature>
<feature type="modified residue" description="Phosphoserine" evidence="10 12">
    <location>
        <position position="61"/>
    </location>
</feature>
<feature type="modified residue" description="Phosphoserine" evidence="1">
    <location>
        <position position="64"/>
    </location>
</feature>
<feature type="splice variant" id="VSP_040037" description="In isoform 3." evidence="8">
    <location>
        <begin position="1"/>
        <end position="13"/>
    </location>
</feature>
<feature type="splice variant" id="VSP_040038" description="In isoform 2." evidence="7">
    <original>MAEG</original>
    <variation>MKNLVVPMWEGKWKTAKRARMNYKVKLEEISGLLVDALYTNTIYYLIKVDYREVWLIRLFYNFSFL</variation>
    <location>
        <begin position="1"/>
        <end position="4"/>
    </location>
</feature>
<feature type="sequence variant" id="VAR_023098" description="In dbSNP:rs10786783." evidence="4">
    <original>D</original>
    <variation>G</variation>
    <location>
        <position position="19"/>
    </location>
</feature>
<feature type="modified residue" description="N-acetylmethionine" evidence="11">
    <location sequence="Q86XK3-3">
        <position position="1"/>
    </location>
</feature>
<name>SFR1_HUMAN</name>
<protein>
    <recommendedName>
        <fullName>Swi5-dependent recombination DNA repair protein 1 homolog</fullName>
    </recommendedName>
    <alternativeName>
        <fullName>Meiosis protein 5 homolog</fullName>
    </alternativeName>
</protein>
<dbReference type="EMBL" id="AK291184">
    <property type="protein sequence ID" value="BAF83873.1"/>
    <property type="molecule type" value="mRNA"/>
</dbReference>
<dbReference type="EMBL" id="AL357336">
    <property type="status" value="NOT_ANNOTATED_CDS"/>
    <property type="molecule type" value="Genomic_DNA"/>
</dbReference>
<dbReference type="EMBL" id="CH471066">
    <property type="protein sequence ID" value="EAW49610.1"/>
    <property type="molecule type" value="Genomic_DNA"/>
</dbReference>
<dbReference type="EMBL" id="CH471066">
    <property type="protein sequence ID" value="EAW49611.1"/>
    <property type="molecule type" value="Genomic_DNA"/>
</dbReference>
<dbReference type="EMBL" id="BC020892">
    <property type="protein sequence ID" value="AAH20892.2"/>
    <property type="molecule type" value="mRNA"/>
</dbReference>
<dbReference type="EMBL" id="BC140835">
    <property type="protein sequence ID" value="AAI40836.1"/>
    <property type="molecule type" value="mRNA"/>
</dbReference>
<dbReference type="CCDS" id="CCDS31279.1">
    <molecule id="Q86XK3-1"/>
</dbReference>
<dbReference type="CCDS" id="CCDS31280.1">
    <molecule id="Q86XK3-3"/>
</dbReference>
<dbReference type="RefSeq" id="NP_001002759.1">
    <molecule id="Q86XK3-1"/>
    <property type="nucleotide sequence ID" value="NM_001002759.2"/>
</dbReference>
<dbReference type="RefSeq" id="NP_001371758.1">
    <molecule id="Q86XK3-3"/>
    <property type="nucleotide sequence ID" value="NM_001384829.1"/>
</dbReference>
<dbReference type="RefSeq" id="NP_001371759.1">
    <molecule id="Q86XK3-3"/>
    <property type="nucleotide sequence ID" value="NM_001384830.1"/>
</dbReference>
<dbReference type="RefSeq" id="NP_660290.3">
    <molecule id="Q86XK3-3"/>
    <property type="nucleotide sequence ID" value="NM_145247.4"/>
</dbReference>
<dbReference type="RefSeq" id="XP_005269578.1">
    <molecule id="Q86XK3-2"/>
    <property type="nucleotide sequence ID" value="XM_005269521.4"/>
</dbReference>
<dbReference type="RefSeq" id="XP_016871161.1">
    <property type="nucleotide sequence ID" value="XM_017015672.1"/>
</dbReference>
<dbReference type="RefSeq" id="XP_054220724.1">
    <molecule id="Q86XK3-2"/>
    <property type="nucleotide sequence ID" value="XM_054364749.1"/>
</dbReference>
<dbReference type="SMR" id="Q86XK3"/>
<dbReference type="BioGRID" id="125639">
    <property type="interactions" value="35"/>
</dbReference>
<dbReference type="ComplexPortal" id="CPX-8093">
    <property type="entry name" value="SWI5-SFR1 recombination accessory factor complex"/>
</dbReference>
<dbReference type="FunCoup" id="Q86XK3">
    <property type="interactions" value="2501"/>
</dbReference>
<dbReference type="IntAct" id="Q86XK3">
    <property type="interactions" value="29"/>
</dbReference>
<dbReference type="STRING" id="9606.ENSP00000358742"/>
<dbReference type="iPTMnet" id="Q86XK3"/>
<dbReference type="PhosphoSitePlus" id="Q86XK3"/>
<dbReference type="BioMuta" id="SFR1"/>
<dbReference type="DMDM" id="311033362"/>
<dbReference type="jPOST" id="Q86XK3"/>
<dbReference type="MassIVE" id="Q86XK3"/>
<dbReference type="PaxDb" id="9606-ENSP00000358742"/>
<dbReference type="PeptideAtlas" id="Q86XK3"/>
<dbReference type="ProteomicsDB" id="70291">
    <molecule id="Q86XK3-1"/>
</dbReference>
<dbReference type="ProteomicsDB" id="70292">
    <molecule id="Q86XK3-2"/>
</dbReference>
<dbReference type="ProteomicsDB" id="70293">
    <molecule id="Q86XK3-3"/>
</dbReference>
<dbReference type="Pumba" id="Q86XK3"/>
<dbReference type="Antibodypedia" id="48828">
    <property type="antibodies" value="87 antibodies from 15 providers"/>
</dbReference>
<dbReference type="DNASU" id="119392"/>
<dbReference type="Ensembl" id="ENST00000369727.4">
    <molecule id="Q86XK3-1"/>
    <property type="protein sequence ID" value="ENSP00000358742.3"/>
    <property type="gene ID" value="ENSG00000156384.15"/>
</dbReference>
<dbReference type="Ensembl" id="ENST00000369729.7">
    <molecule id="Q86XK3-3"/>
    <property type="protein sequence ID" value="ENSP00000358744.3"/>
    <property type="gene ID" value="ENSG00000156384.15"/>
</dbReference>
<dbReference type="GeneID" id="119392"/>
<dbReference type="KEGG" id="hsa:119392"/>
<dbReference type="MANE-Select" id="ENST00000369727.4">
    <property type="protein sequence ID" value="ENSP00000358742.3"/>
    <property type="RefSeq nucleotide sequence ID" value="NM_001002759.2"/>
    <property type="RefSeq protein sequence ID" value="NP_001002759.1"/>
</dbReference>
<dbReference type="UCSC" id="uc001kxs.3">
    <molecule id="Q86XK3-1"/>
    <property type="organism name" value="human"/>
</dbReference>
<dbReference type="AGR" id="HGNC:29574"/>
<dbReference type="CTD" id="119392"/>
<dbReference type="GeneCards" id="SFR1"/>
<dbReference type="HGNC" id="HGNC:29574">
    <property type="gene designation" value="SFR1"/>
</dbReference>
<dbReference type="HPA" id="ENSG00000156384">
    <property type="expression patterns" value="Low tissue specificity"/>
</dbReference>
<dbReference type="MIM" id="616527">
    <property type="type" value="gene"/>
</dbReference>
<dbReference type="neXtProt" id="NX_Q86XK3"/>
<dbReference type="OpenTargets" id="ENSG00000156384"/>
<dbReference type="PharmGKB" id="PA134989928"/>
<dbReference type="VEuPathDB" id="HostDB:ENSG00000156384"/>
<dbReference type="eggNOG" id="ENOG502S1QX">
    <property type="taxonomic scope" value="Eukaryota"/>
</dbReference>
<dbReference type="GeneTree" id="ENSGT00390000018550"/>
<dbReference type="HOGENOM" id="CLU_075586_1_0_1"/>
<dbReference type="InParanoid" id="Q86XK3"/>
<dbReference type="OMA" id="RSFNANF"/>
<dbReference type="OrthoDB" id="10051617at2759"/>
<dbReference type="PAN-GO" id="Q86XK3">
    <property type="GO annotations" value="4 GO annotations based on evolutionary models"/>
</dbReference>
<dbReference type="PhylomeDB" id="Q86XK3"/>
<dbReference type="TreeFam" id="TF332725"/>
<dbReference type="PathwayCommons" id="Q86XK3"/>
<dbReference type="SignaLink" id="Q86XK3"/>
<dbReference type="BioGRID-ORCS" id="119392">
    <property type="hits" value="80 hits in 1151 CRISPR screens"/>
</dbReference>
<dbReference type="ChiTaRS" id="SFR1">
    <property type="organism name" value="human"/>
</dbReference>
<dbReference type="GenomeRNAi" id="119392"/>
<dbReference type="Pharos" id="Q86XK3">
    <property type="development level" value="Tbio"/>
</dbReference>
<dbReference type="PRO" id="PR:Q86XK3"/>
<dbReference type="Proteomes" id="UP000005640">
    <property type="component" value="Chromosome 10"/>
</dbReference>
<dbReference type="RNAct" id="Q86XK3">
    <property type="molecule type" value="protein"/>
</dbReference>
<dbReference type="Bgee" id="ENSG00000156384">
    <property type="expression patterns" value="Expressed in epithelial cell of pancreas and 182 other cell types or tissues"/>
</dbReference>
<dbReference type="GO" id="GO:0005813">
    <property type="term" value="C:centrosome"/>
    <property type="evidence" value="ECO:0000314"/>
    <property type="project" value="HPA"/>
</dbReference>
<dbReference type="GO" id="GO:0005730">
    <property type="term" value="C:nucleolus"/>
    <property type="evidence" value="ECO:0000314"/>
    <property type="project" value="HPA"/>
</dbReference>
<dbReference type="GO" id="GO:0005654">
    <property type="term" value="C:nucleoplasm"/>
    <property type="evidence" value="ECO:0000314"/>
    <property type="project" value="HPA"/>
</dbReference>
<dbReference type="GO" id="GO:0005634">
    <property type="term" value="C:nucleus"/>
    <property type="evidence" value="ECO:0000314"/>
    <property type="project" value="UniProtKB"/>
</dbReference>
<dbReference type="GO" id="GO:0032798">
    <property type="term" value="C:Swi5-Sfr1 complex"/>
    <property type="evidence" value="ECO:0000314"/>
    <property type="project" value="UniProtKB"/>
</dbReference>
<dbReference type="GO" id="GO:0003713">
    <property type="term" value="F:transcription coactivator activity"/>
    <property type="evidence" value="ECO:0000314"/>
    <property type="project" value="UniProtKB"/>
</dbReference>
<dbReference type="GO" id="GO:0071391">
    <property type="term" value="P:cellular response to estrogen stimulus"/>
    <property type="evidence" value="ECO:0000314"/>
    <property type="project" value="UniProtKB"/>
</dbReference>
<dbReference type="GO" id="GO:0000724">
    <property type="term" value="P:double-strand break repair via homologous recombination"/>
    <property type="evidence" value="ECO:0000315"/>
    <property type="project" value="UniProtKB"/>
</dbReference>
<dbReference type="GO" id="GO:0045893">
    <property type="term" value="P:positive regulation of DNA-templated transcription"/>
    <property type="evidence" value="ECO:0000314"/>
    <property type="project" value="UniProtKB"/>
</dbReference>
<dbReference type="Gene3D" id="6.10.140.1020">
    <property type="match status" value="1"/>
</dbReference>
<dbReference type="InterPro" id="IPR042429">
    <property type="entry name" value="SFR1"/>
</dbReference>
<dbReference type="InterPro" id="IPR018468">
    <property type="entry name" value="SFR1/Mei5"/>
</dbReference>
<dbReference type="PANTHER" id="PTHR28643">
    <property type="entry name" value="SWI5-DEPENDENT RECOMBINATION DNA REPAIR PROTEIN 1 HOMOLOG"/>
    <property type="match status" value="1"/>
</dbReference>
<dbReference type="PANTHER" id="PTHR28643:SF1">
    <property type="entry name" value="SWI5-DEPENDENT RECOMBINATION DNA REPAIR PROTEIN 1 HOMOLOG"/>
    <property type="match status" value="1"/>
</dbReference>
<dbReference type="Pfam" id="PF10376">
    <property type="entry name" value="Mei5"/>
    <property type="match status" value="1"/>
</dbReference>
<keyword id="KW-0007">Acetylation</keyword>
<keyword id="KW-0025">Alternative splicing</keyword>
<keyword id="KW-0175">Coiled coil</keyword>
<keyword id="KW-0227">DNA damage</keyword>
<keyword id="KW-0234">DNA repair</keyword>
<keyword id="KW-0539">Nucleus</keyword>
<keyword id="KW-0597">Phosphoprotein</keyword>
<keyword id="KW-1267">Proteomics identification</keyword>
<keyword id="KW-1185">Reference proteome</keyword>
<keyword id="KW-0804">Transcription</keyword>
<keyword id="KW-0805">Transcription regulation</keyword>
<gene>
    <name type="primary">SFR1</name>
    <name type="synonym">C10orf78</name>
    <name type="synonym">MEI5</name>
    <name type="synonym">MEIR5</name>
</gene>
<comment type="function">
    <text evidence="5 6">Component of the SWI5-SFR1 complex, a complex required for double-strand break repair via homologous recombination (PubMed:21252223). Acts as a transcriptional modulator for ESR1 (PubMed:23874500).</text>
</comment>
<comment type="subunit">
    <text evidence="5 6">Component of the SWI5-SFR1 complex. Interacts with RAD51; the interaction is weak (PubMed:21252223). Interacts with ESR1 in the ligand-independent and ligand-dependent manner (PubMed:23874500).</text>
</comment>
<comment type="interaction">
    <interactant intactId="EBI-1104535">
        <id>Q86XK3</id>
    </interactant>
    <interactant intactId="EBI-739624">
        <id>Q8NHQ1</id>
        <label>CEP70</label>
    </interactant>
    <organismsDiffer>false</organismsDiffer>
    <experiments>3</experiments>
</comment>
<comment type="interaction">
    <interactant intactId="EBI-1104535">
        <id>Q86XK3</id>
    </interactant>
    <interactant intactId="EBI-10212206">
        <id>Q6NT76-2</id>
        <label>HMBOX1</label>
    </interactant>
    <organismsDiffer>false</organismsDiffer>
    <experiments>3</experiments>
</comment>
<comment type="interaction">
    <interactant intactId="EBI-1104535">
        <id>Q86XK3</id>
    </interactant>
    <interactant intactId="EBI-748896">
        <id>Q96HT8</id>
        <label>MRFAP1L1</label>
    </interactant>
    <organismsDiffer>false</organismsDiffer>
    <experiments>3</experiments>
</comment>
<comment type="interaction">
    <interactant intactId="EBI-1104535">
        <id>Q86XK3</id>
    </interactant>
    <interactant intactId="EBI-715849">
        <id>O14777</id>
        <label>NDC80</label>
    </interactant>
    <organismsDiffer>false</organismsDiffer>
    <experiments>3</experiments>
</comment>
<comment type="interaction">
    <interactant intactId="EBI-1104535">
        <id>Q86XK3</id>
    </interactant>
    <interactant intactId="EBI-372942">
        <id>Q13287</id>
        <label>NMI</label>
    </interactant>
    <organismsDiffer>false</organismsDiffer>
    <experiments>6</experiments>
</comment>
<comment type="interaction">
    <interactant intactId="EBI-1104535">
        <id>Q86XK3</id>
    </interactant>
    <interactant intactId="EBI-726876">
        <id>Q6NUQ1</id>
        <label>RINT1</label>
    </interactant>
    <organismsDiffer>false</organismsDiffer>
    <experiments>4</experiments>
</comment>
<comment type="interaction">
    <interactant intactId="EBI-1104535">
        <id>Q86XK3</id>
    </interactant>
    <interactant intactId="EBI-744408">
        <id>O75150</id>
        <label>RNF40</label>
    </interactant>
    <organismsDiffer>false</organismsDiffer>
    <experiments>4</experiments>
</comment>
<comment type="interaction">
    <interactant intactId="EBI-1104535">
        <id>Q86XK3</id>
    </interactant>
    <interactant intactId="EBI-20832852">
        <id>Q1ZZU3</id>
        <label>SWI5</label>
    </interactant>
    <organismsDiffer>false</organismsDiffer>
    <experiments>6</experiments>
</comment>
<comment type="interaction">
    <interactant intactId="EBI-1104535">
        <id>Q86XK3</id>
    </interactant>
    <interactant intactId="EBI-1105213">
        <id>Q9UBB9</id>
        <label>TFIP11</label>
    </interactant>
    <organismsDiffer>false</organismsDiffer>
    <experiments>4</experiments>
</comment>
<comment type="subcellular location">
    <subcellularLocation>
        <location evidence="6">Nucleus</location>
    </subcellularLocation>
    <text evidence="6">Colocalizes with ESR1 in the nucleus.</text>
</comment>
<comment type="alternative products">
    <event type="alternative splicing"/>
    <isoform>
        <id>Q86XK3-1</id>
        <name>1</name>
        <sequence type="displayed"/>
    </isoform>
    <isoform>
        <id>Q86XK3-2</id>
        <name>2</name>
        <sequence type="described" ref="VSP_040038"/>
    </isoform>
    <isoform>
        <id>Q86XK3-3</id>
        <name>3</name>
        <sequence type="described" ref="VSP_040037"/>
    </isoform>
</comment>
<comment type="tissue specificity">
    <text evidence="5">Widely expressed.</text>
</comment>
<comment type="similarity">
    <text evidence="9">Belongs to the SFR1/MEI5 family.</text>
</comment>
<organism>
    <name type="scientific">Homo sapiens</name>
    <name type="common">Human</name>
    <dbReference type="NCBI Taxonomy" id="9606"/>
    <lineage>
        <taxon>Eukaryota</taxon>
        <taxon>Metazoa</taxon>
        <taxon>Chordata</taxon>
        <taxon>Craniata</taxon>
        <taxon>Vertebrata</taxon>
        <taxon>Euteleostomi</taxon>
        <taxon>Mammalia</taxon>
        <taxon>Eutheria</taxon>
        <taxon>Euarchontoglires</taxon>
        <taxon>Primates</taxon>
        <taxon>Haplorrhini</taxon>
        <taxon>Catarrhini</taxon>
        <taxon>Hominidae</taxon>
        <taxon>Homo</taxon>
    </lineage>
</organism>
<sequence length="245" mass="28262">MAEGEKNQDFTFKMESPSDSAVVLPSTPQASANPSSPYTNSSRKQPMSATLRERLRKTRFSFNSSYNVVKRLKVESEENDQTFSEKPASSTEENCLEFQESFKHIDSEFEENTNLKNTLKNLNVCESQSLDSGSCSALQNEFVSEKLPKQRLNAEKAKLVKQVQEKEDLLRRLKLVKMYRSKNDLSQLQLLIKKWRSCSQLLLYELQSAVSEENKKLSLTQLIDHYGLDDKLLHYNRSEEEFIDV</sequence>
<proteinExistence type="evidence at protein level"/>
<reference key="1">
    <citation type="journal article" date="2004" name="Nat. Genet.">
        <title>Complete sequencing and characterization of 21,243 full-length human cDNAs.</title>
        <authorList>
            <person name="Ota T."/>
            <person name="Suzuki Y."/>
            <person name="Nishikawa T."/>
            <person name="Otsuki T."/>
            <person name="Sugiyama T."/>
            <person name="Irie R."/>
            <person name="Wakamatsu A."/>
            <person name="Hayashi K."/>
            <person name="Sato H."/>
            <person name="Nagai K."/>
            <person name="Kimura K."/>
            <person name="Makita H."/>
            <person name="Sekine M."/>
            <person name="Obayashi M."/>
            <person name="Nishi T."/>
            <person name="Shibahara T."/>
            <person name="Tanaka T."/>
            <person name="Ishii S."/>
            <person name="Yamamoto J."/>
            <person name="Saito K."/>
            <person name="Kawai Y."/>
            <person name="Isono Y."/>
            <person name="Nakamura Y."/>
            <person name="Nagahari K."/>
            <person name="Murakami K."/>
            <person name="Yasuda T."/>
            <person name="Iwayanagi T."/>
            <person name="Wagatsuma M."/>
            <person name="Shiratori A."/>
            <person name="Sudo H."/>
            <person name="Hosoiri T."/>
            <person name="Kaku Y."/>
            <person name="Kodaira H."/>
            <person name="Kondo H."/>
            <person name="Sugawara M."/>
            <person name="Takahashi M."/>
            <person name="Kanda K."/>
            <person name="Yokoi T."/>
            <person name="Furuya T."/>
            <person name="Kikkawa E."/>
            <person name="Omura Y."/>
            <person name="Abe K."/>
            <person name="Kamihara K."/>
            <person name="Katsuta N."/>
            <person name="Sato K."/>
            <person name="Tanikawa M."/>
            <person name="Yamazaki M."/>
            <person name="Ninomiya K."/>
            <person name="Ishibashi T."/>
            <person name="Yamashita H."/>
            <person name="Murakawa K."/>
            <person name="Fujimori K."/>
            <person name="Tanai H."/>
            <person name="Kimata M."/>
            <person name="Watanabe M."/>
            <person name="Hiraoka S."/>
            <person name="Chiba Y."/>
            <person name="Ishida S."/>
            <person name="Ono Y."/>
            <person name="Takiguchi S."/>
            <person name="Watanabe S."/>
            <person name="Yosida M."/>
            <person name="Hotuta T."/>
            <person name="Kusano J."/>
            <person name="Kanehori K."/>
            <person name="Takahashi-Fujii A."/>
            <person name="Hara H."/>
            <person name="Tanase T.-O."/>
            <person name="Nomura Y."/>
            <person name="Togiya S."/>
            <person name="Komai F."/>
            <person name="Hara R."/>
            <person name="Takeuchi K."/>
            <person name="Arita M."/>
            <person name="Imose N."/>
            <person name="Musashino K."/>
            <person name="Yuuki H."/>
            <person name="Oshima A."/>
            <person name="Sasaki N."/>
            <person name="Aotsuka S."/>
            <person name="Yoshikawa Y."/>
            <person name="Matsunawa H."/>
            <person name="Ichihara T."/>
            <person name="Shiohata N."/>
            <person name="Sano S."/>
            <person name="Moriya S."/>
            <person name="Momiyama H."/>
            <person name="Satoh N."/>
            <person name="Takami S."/>
            <person name="Terashima Y."/>
            <person name="Suzuki O."/>
            <person name="Nakagawa S."/>
            <person name="Senoh A."/>
            <person name="Mizoguchi H."/>
            <person name="Goto Y."/>
            <person name="Shimizu F."/>
            <person name="Wakebe H."/>
            <person name="Hishigaki H."/>
            <person name="Watanabe T."/>
            <person name="Sugiyama A."/>
            <person name="Takemoto M."/>
            <person name="Kawakami B."/>
            <person name="Yamazaki M."/>
            <person name="Watanabe K."/>
            <person name="Kumagai A."/>
            <person name="Itakura S."/>
            <person name="Fukuzumi Y."/>
            <person name="Fujimori Y."/>
            <person name="Komiyama M."/>
            <person name="Tashiro H."/>
            <person name="Tanigami A."/>
            <person name="Fujiwara T."/>
            <person name="Ono T."/>
            <person name="Yamada K."/>
            <person name="Fujii Y."/>
            <person name="Ozaki K."/>
            <person name="Hirao M."/>
            <person name="Ohmori Y."/>
            <person name="Kawabata A."/>
            <person name="Hikiji T."/>
            <person name="Kobatake N."/>
            <person name="Inagaki H."/>
            <person name="Ikema Y."/>
            <person name="Okamoto S."/>
            <person name="Okitani R."/>
            <person name="Kawakami T."/>
            <person name="Noguchi S."/>
            <person name="Itoh T."/>
            <person name="Shigeta K."/>
            <person name="Senba T."/>
            <person name="Matsumura K."/>
            <person name="Nakajima Y."/>
            <person name="Mizuno T."/>
            <person name="Morinaga M."/>
            <person name="Sasaki M."/>
            <person name="Togashi T."/>
            <person name="Oyama M."/>
            <person name="Hata H."/>
            <person name="Watanabe M."/>
            <person name="Komatsu T."/>
            <person name="Mizushima-Sugano J."/>
            <person name="Satoh T."/>
            <person name="Shirai Y."/>
            <person name="Takahashi Y."/>
            <person name="Nakagawa K."/>
            <person name="Okumura K."/>
            <person name="Nagase T."/>
            <person name="Nomura N."/>
            <person name="Kikuchi H."/>
            <person name="Masuho Y."/>
            <person name="Yamashita R."/>
            <person name="Nakai K."/>
            <person name="Yada T."/>
            <person name="Nakamura Y."/>
            <person name="Ohara O."/>
            <person name="Isogai T."/>
            <person name="Sugano S."/>
        </authorList>
    </citation>
    <scope>NUCLEOTIDE SEQUENCE [LARGE SCALE MRNA] (ISOFORM 2)</scope>
</reference>
<reference key="2">
    <citation type="journal article" date="2004" name="Nature">
        <title>The DNA sequence and comparative analysis of human chromosome 10.</title>
        <authorList>
            <person name="Deloukas P."/>
            <person name="Earthrowl M.E."/>
            <person name="Grafham D.V."/>
            <person name="Rubenfield M."/>
            <person name="French L."/>
            <person name="Steward C.A."/>
            <person name="Sims S.K."/>
            <person name="Jones M.C."/>
            <person name="Searle S."/>
            <person name="Scott C."/>
            <person name="Howe K."/>
            <person name="Hunt S.E."/>
            <person name="Andrews T.D."/>
            <person name="Gilbert J.G.R."/>
            <person name="Swarbreck D."/>
            <person name="Ashurst J.L."/>
            <person name="Taylor A."/>
            <person name="Battles J."/>
            <person name="Bird C.P."/>
            <person name="Ainscough R."/>
            <person name="Almeida J.P."/>
            <person name="Ashwell R.I.S."/>
            <person name="Ambrose K.D."/>
            <person name="Babbage A.K."/>
            <person name="Bagguley C.L."/>
            <person name="Bailey J."/>
            <person name="Banerjee R."/>
            <person name="Bates K."/>
            <person name="Beasley H."/>
            <person name="Bray-Allen S."/>
            <person name="Brown A.J."/>
            <person name="Brown J.Y."/>
            <person name="Burford D.C."/>
            <person name="Burrill W."/>
            <person name="Burton J."/>
            <person name="Cahill P."/>
            <person name="Camire D."/>
            <person name="Carter N.P."/>
            <person name="Chapman J.C."/>
            <person name="Clark S.Y."/>
            <person name="Clarke G."/>
            <person name="Clee C.M."/>
            <person name="Clegg S."/>
            <person name="Corby N."/>
            <person name="Coulson A."/>
            <person name="Dhami P."/>
            <person name="Dutta I."/>
            <person name="Dunn M."/>
            <person name="Faulkner L."/>
            <person name="Frankish A."/>
            <person name="Frankland J.A."/>
            <person name="Garner P."/>
            <person name="Garnett J."/>
            <person name="Gribble S."/>
            <person name="Griffiths C."/>
            <person name="Grocock R."/>
            <person name="Gustafson E."/>
            <person name="Hammond S."/>
            <person name="Harley J.L."/>
            <person name="Hart E."/>
            <person name="Heath P.D."/>
            <person name="Ho T.P."/>
            <person name="Hopkins B."/>
            <person name="Horne J."/>
            <person name="Howden P.J."/>
            <person name="Huckle E."/>
            <person name="Hynds C."/>
            <person name="Johnson C."/>
            <person name="Johnson D."/>
            <person name="Kana A."/>
            <person name="Kay M."/>
            <person name="Kimberley A.M."/>
            <person name="Kershaw J.K."/>
            <person name="Kokkinaki M."/>
            <person name="Laird G.K."/>
            <person name="Lawlor S."/>
            <person name="Lee H.M."/>
            <person name="Leongamornlert D.A."/>
            <person name="Laird G."/>
            <person name="Lloyd C."/>
            <person name="Lloyd D.M."/>
            <person name="Loveland J."/>
            <person name="Lovell J."/>
            <person name="McLaren S."/>
            <person name="McLay K.E."/>
            <person name="McMurray A."/>
            <person name="Mashreghi-Mohammadi M."/>
            <person name="Matthews L."/>
            <person name="Milne S."/>
            <person name="Nickerson T."/>
            <person name="Nguyen M."/>
            <person name="Overton-Larty E."/>
            <person name="Palmer S.A."/>
            <person name="Pearce A.V."/>
            <person name="Peck A.I."/>
            <person name="Pelan S."/>
            <person name="Phillimore B."/>
            <person name="Porter K."/>
            <person name="Rice C.M."/>
            <person name="Rogosin A."/>
            <person name="Ross M.T."/>
            <person name="Sarafidou T."/>
            <person name="Sehra H.K."/>
            <person name="Shownkeen R."/>
            <person name="Skuce C.D."/>
            <person name="Smith M."/>
            <person name="Standring L."/>
            <person name="Sycamore N."/>
            <person name="Tester J."/>
            <person name="Thorpe A."/>
            <person name="Torcasso W."/>
            <person name="Tracey A."/>
            <person name="Tromans A."/>
            <person name="Tsolas J."/>
            <person name="Wall M."/>
            <person name="Walsh J."/>
            <person name="Wang H."/>
            <person name="Weinstock K."/>
            <person name="West A.P."/>
            <person name="Willey D.L."/>
            <person name="Whitehead S.L."/>
            <person name="Wilming L."/>
            <person name="Wray P.W."/>
            <person name="Young L."/>
            <person name="Chen Y."/>
            <person name="Lovering R.C."/>
            <person name="Moschonas N.K."/>
            <person name="Siebert R."/>
            <person name="Fechtel K."/>
            <person name="Bentley D."/>
            <person name="Durbin R.M."/>
            <person name="Hubbard T."/>
            <person name="Doucette-Stamm L."/>
            <person name="Beck S."/>
            <person name="Smith D.R."/>
            <person name="Rogers J."/>
        </authorList>
    </citation>
    <scope>NUCLEOTIDE SEQUENCE [LARGE SCALE GENOMIC DNA]</scope>
</reference>
<reference key="3">
    <citation type="submission" date="2005-09" db="EMBL/GenBank/DDBJ databases">
        <authorList>
            <person name="Mural R.J."/>
            <person name="Istrail S."/>
            <person name="Sutton G.G."/>
            <person name="Florea L."/>
            <person name="Halpern A.L."/>
            <person name="Mobarry C.M."/>
            <person name="Lippert R."/>
            <person name="Walenz B."/>
            <person name="Shatkay H."/>
            <person name="Dew I."/>
            <person name="Miller J.R."/>
            <person name="Flanigan M.J."/>
            <person name="Edwards N.J."/>
            <person name="Bolanos R."/>
            <person name="Fasulo D."/>
            <person name="Halldorsson B.V."/>
            <person name="Hannenhalli S."/>
            <person name="Turner R."/>
            <person name="Yooseph S."/>
            <person name="Lu F."/>
            <person name="Nusskern D.R."/>
            <person name="Shue B.C."/>
            <person name="Zheng X.H."/>
            <person name="Zhong F."/>
            <person name="Delcher A.L."/>
            <person name="Huson D.H."/>
            <person name="Kravitz S.A."/>
            <person name="Mouchard L."/>
            <person name="Reinert K."/>
            <person name="Remington K.A."/>
            <person name="Clark A.G."/>
            <person name="Waterman M.S."/>
            <person name="Eichler E.E."/>
            <person name="Adams M.D."/>
            <person name="Hunkapiller M.W."/>
            <person name="Myers E.W."/>
            <person name="Venter J.C."/>
        </authorList>
    </citation>
    <scope>NUCLEOTIDE SEQUENCE [LARGE SCALE GENOMIC DNA]</scope>
</reference>
<reference key="4">
    <citation type="journal article" date="2004" name="Genome Res.">
        <title>The status, quality, and expansion of the NIH full-length cDNA project: the Mammalian Gene Collection (MGC).</title>
        <authorList>
            <consortium name="The MGC Project Team"/>
        </authorList>
    </citation>
    <scope>NUCLEOTIDE SEQUENCE [LARGE SCALE MRNA] (ISOFORM 3)</scope>
    <scope>PARTIAL NUCLEOTIDE SEQUENCE [LARGE SCALE MRNA] (ISOFORM 2)</scope>
    <scope>VARIANT GLY-19</scope>
    <source>
        <tissue>Brain</tissue>
        <tissue>Lung</tissue>
    </source>
</reference>
<reference key="5">
    <citation type="journal article" date="2009" name="Sci. Signal.">
        <title>Quantitative phosphoproteomic analysis of T cell receptor signaling reveals system-wide modulation of protein-protein interactions.</title>
        <authorList>
            <person name="Mayya V."/>
            <person name="Lundgren D.H."/>
            <person name="Hwang S.-I."/>
            <person name="Rezaul K."/>
            <person name="Wu L."/>
            <person name="Eng J.K."/>
            <person name="Rodionov V."/>
            <person name="Han D.K."/>
        </authorList>
    </citation>
    <scope>PHOSPHORYLATION [LARGE SCALE ANALYSIS] AT SER-61</scope>
    <scope>IDENTIFICATION BY MASS SPECTROMETRY [LARGE SCALE ANALYSIS]</scope>
    <source>
        <tissue>Leukemic T-cell</tissue>
    </source>
</reference>
<reference key="6">
    <citation type="journal article" date="2011" name="J. Biol. Chem.">
        <title>The role of human SWI5-MEI5 complex in homologous recombination repair.</title>
        <authorList>
            <person name="Yuan J."/>
            <person name="Chen J."/>
        </authorList>
    </citation>
    <scope>FUNCTION</scope>
    <scope>IDENTIFICATION IN THE SWI5-SFR1 COMPLEX</scope>
    <scope>INTERACTION WITH RAD51</scope>
    <scope>TISSUE SPECIFICITY</scope>
</reference>
<reference key="7">
    <citation type="journal article" date="2012" name="Proc. Natl. Acad. Sci. U.S.A.">
        <title>N-terminal acetylome analyses and functional insights of the N-terminal acetyltransferase NatB.</title>
        <authorList>
            <person name="Van Damme P."/>
            <person name="Lasa M."/>
            <person name="Polevoda B."/>
            <person name="Gazquez C."/>
            <person name="Elosegui-Artola A."/>
            <person name="Kim D.S."/>
            <person name="De Juan-Pardo E."/>
            <person name="Demeyer K."/>
            <person name="Hole K."/>
            <person name="Larrea E."/>
            <person name="Timmerman E."/>
            <person name="Prieto J."/>
            <person name="Arnesen T."/>
            <person name="Sherman F."/>
            <person name="Gevaert K."/>
            <person name="Aldabe R."/>
        </authorList>
    </citation>
    <scope>ACETYLATION [LARGE SCALE ANALYSIS] AT MET-1 (ISOFORM 3)</scope>
    <scope>IDENTIFICATION BY MASS SPECTROMETRY [LARGE SCALE ANALYSIS]</scope>
</reference>
<reference key="8">
    <citation type="journal article" date="2013" name="J. Proteome Res.">
        <title>Toward a comprehensive characterization of a human cancer cell phosphoproteome.</title>
        <authorList>
            <person name="Zhou H."/>
            <person name="Di Palma S."/>
            <person name="Preisinger C."/>
            <person name="Peng M."/>
            <person name="Polat A.N."/>
            <person name="Heck A.J."/>
            <person name="Mohammed S."/>
        </authorList>
    </citation>
    <scope>PHOSPHORYLATION [LARGE SCALE ANALYSIS] AT SER-61</scope>
    <scope>IDENTIFICATION BY MASS SPECTROMETRY [LARGE SCALE ANALYSIS]</scope>
    <source>
        <tissue>Cervix carcinoma</tissue>
        <tissue>Erythroleukemia</tissue>
    </source>
</reference>
<reference key="9">
    <citation type="journal article" date="2013" name="PLoS ONE">
        <title>DNA homologous recombination factor SFR1 physically and functionally interacts with estrogen receptor alpha.</title>
        <authorList>
            <person name="Feng Y."/>
            <person name="Singleton D."/>
            <person name="Guo C."/>
            <person name="Gardner A."/>
            <person name="Pakala S."/>
            <person name="Kumar R."/>
            <person name="Jensen E."/>
            <person name="Zhang J."/>
            <person name="Khan S."/>
        </authorList>
    </citation>
    <scope>INTERACTION WITH ESR1</scope>
    <scope>SUBCELLULAR LOCATION</scope>
    <scope>FUNCTION</scope>
</reference>
<evidence type="ECO:0000250" key="1">
    <source>
        <dbReference type="UniProtKB" id="Q8BP27"/>
    </source>
</evidence>
<evidence type="ECO:0000255" key="2"/>
<evidence type="ECO:0000256" key="3">
    <source>
        <dbReference type="SAM" id="MobiDB-lite"/>
    </source>
</evidence>
<evidence type="ECO:0000269" key="4">
    <source>
    </source>
</evidence>
<evidence type="ECO:0000269" key="5">
    <source>
    </source>
</evidence>
<evidence type="ECO:0000269" key="6">
    <source>
    </source>
</evidence>
<evidence type="ECO:0000303" key="7">
    <source>
    </source>
</evidence>
<evidence type="ECO:0000303" key="8">
    <source>
    </source>
</evidence>
<evidence type="ECO:0000305" key="9"/>
<evidence type="ECO:0007744" key="10">
    <source>
    </source>
</evidence>
<evidence type="ECO:0007744" key="11">
    <source>
    </source>
</evidence>
<evidence type="ECO:0007744" key="12">
    <source>
    </source>
</evidence>
<accession>Q86XK3</accession>
<accession>A8K569</accession>
<accession>B2RTV8</accession>
<accession>Q5JT39</accession>
<accession>Q5JT40</accession>
<accession>Q8WW47</accession>